<reference key="1">
    <citation type="journal article" date="1997" name="Yeast">
        <title>Analysis of an 11.6 kb region from the right arm of chromosome VII of Saccharomyces cerevisiae between the RAD2 and the MES1 genes reveals the presence of three new genes.</title>
        <authorList>
            <person name="Clemente M.L."/>
            <person name="Sartori G."/>
            <person name="Cardazzo B."/>
            <person name="Carignani G."/>
        </authorList>
    </citation>
    <scope>NUCLEOTIDE SEQUENCE [GENOMIC DNA]</scope>
    <source>
        <strain>ATCC 96604 / S288c / FY1679</strain>
    </source>
</reference>
<reference key="2">
    <citation type="journal article" date="1997" name="Nature">
        <title>The nucleotide sequence of Saccharomyces cerevisiae chromosome VII.</title>
        <authorList>
            <person name="Tettelin H."/>
            <person name="Agostoni-Carbone M.L."/>
            <person name="Albermann K."/>
            <person name="Albers M."/>
            <person name="Arroyo J."/>
            <person name="Backes U."/>
            <person name="Barreiros T."/>
            <person name="Bertani I."/>
            <person name="Bjourson A.J."/>
            <person name="Brueckner M."/>
            <person name="Bruschi C.V."/>
            <person name="Carignani G."/>
            <person name="Castagnoli L."/>
            <person name="Cerdan E."/>
            <person name="Clemente M.L."/>
            <person name="Coblenz A."/>
            <person name="Coglievina M."/>
            <person name="Coissac E."/>
            <person name="Defoor E."/>
            <person name="Del Bino S."/>
            <person name="Delius H."/>
            <person name="Delneri D."/>
            <person name="de Wergifosse P."/>
            <person name="Dujon B."/>
            <person name="Durand P."/>
            <person name="Entian K.-D."/>
            <person name="Eraso P."/>
            <person name="Escribano V."/>
            <person name="Fabiani L."/>
            <person name="Fartmann B."/>
            <person name="Feroli F."/>
            <person name="Feuermann M."/>
            <person name="Frontali L."/>
            <person name="Garcia-Gonzalez M."/>
            <person name="Garcia-Saez M.I."/>
            <person name="Goffeau A."/>
            <person name="Guerreiro P."/>
            <person name="Hani J."/>
            <person name="Hansen M."/>
            <person name="Hebling U."/>
            <person name="Hernandez K."/>
            <person name="Heumann K."/>
            <person name="Hilger F."/>
            <person name="Hofmann B."/>
            <person name="Indge K.J."/>
            <person name="James C.M."/>
            <person name="Klima R."/>
            <person name="Koetter P."/>
            <person name="Kramer B."/>
            <person name="Kramer W."/>
            <person name="Lauquin G."/>
            <person name="Leuther H."/>
            <person name="Louis E.J."/>
            <person name="Maillier E."/>
            <person name="Marconi A."/>
            <person name="Martegani E."/>
            <person name="Mazon M.J."/>
            <person name="Mazzoni C."/>
            <person name="McReynolds A.D.K."/>
            <person name="Melchioretto P."/>
            <person name="Mewes H.-W."/>
            <person name="Minenkova O."/>
            <person name="Mueller-Auer S."/>
            <person name="Nawrocki A."/>
            <person name="Netter P."/>
            <person name="Neu R."/>
            <person name="Nombela C."/>
            <person name="Oliver S.G."/>
            <person name="Panzeri L."/>
            <person name="Paoluzi S."/>
            <person name="Plevani P."/>
            <person name="Portetelle D."/>
            <person name="Portillo F."/>
            <person name="Potier S."/>
            <person name="Purnelle B."/>
            <person name="Rieger M."/>
            <person name="Riles L."/>
            <person name="Rinaldi T."/>
            <person name="Robben J."/>
            <person name="Rodrigues-Pousada C."/>
            <person name="Rodriguez-Belmonte E."/>
            <person name="Rodriguez-Torres A.M."/>
            <person name="Rose M."/>
            <person name="Ruzzi M."/>
            <person name="Saliola M."/>
            <person name="Sanchez-Perez M."/>
            <person name="Schaefer B."/>
            <person name="Schaefer M."/>
            <person name="Scharfe M."/>
            <person name="Schmidheini T."/>
            <person name="Schreer A."/>
            <person name="Skala J."/>
            <person name="Souciet J.-L."/>
            <person name="Steensma H.Y."/>
            <person name="Talla E."/>
            <person name="Thierry A."/>
            <person name="Vandenbol M."/>
            <person name="van der Aart Q.J.M."/>
            <person name="Van Dyck L."/>
            <person name="Vanoni M."/>
            <person name="Verhasselt P."/>
            <person name="Voet M."/>
            <person name="Volckaert G."/>
            <person name="Wambutt R."/>
            <person name="Watson M.D."/>
            <person name="Weber N."/>
            <person name="Wedler E."/>
            <person name="Wedler H."/>
            <person name="Wipfli P."/>
            <person name="Wolf K."/>
            <person name="Wright L.F."/>
            <person name="Zaccaria P."/>
            <person name="Zimmermann M."/>
            <person name="Zollner A."/>
            <person name="Kleine K."/>
        </authorList>
    </citation>
    <scope>NUCLEOTIDE SEQUENCE [LARGE SCALE GENOMIC DNA]</scope>
    <source>
        <strain>ATCC 204508 / S288c</strain>
    </source>
</reference>
<reference key="3">
    <citation type="journal article" date="2014" name="G3 (Bethesda)">
        <title>The reference genome sequence of Saccharomyces cerevisiae: Then and now.</title>
        <authorList>
            <person name="Engel S.R."/>
            <person name="Dietrich F.S."/>
            <person name="Fisk D.G."/>
            <person name="Binkley G."/>
            <person name="Balakrishnan R."/>
            <person name="Costanzo M.C."/>
            <person name="Dwight S.S."/>
            <person name="Hitz B.C."/>
            <person name="Karra K."/>
            <person name="Nash R.S."/>
            <person name="Weng S."/>
            <person name="Wong E.D."/>
            <person name="Lloyd P."/>
            <person name="Skrzypek M.S."/>
            <person name="Miyasato S.R."/>
            <person name="Simison M."/>
            <person name="Cherry J.M."/>
        </authorList>
    </citation>
    <scope>GENOME REANNOTATION</scope>
    <source>
        <strain>ATCC 204508 / S288c</strain>
    </source>
</reference>
<reference key="4">
    <citation type="journal article" date="2007" name="EMBO J.">
        <title>An acetylation/deacetylation cycle controls the export of sterols and steroids from S. cerevisiae.</title>
        <authorList>
            <person name="Tiwari R."/>
            <person name="Koffel R."/>
            <person name="Schneiter R."/>
        </authorList>
    </citation>
    <scope>FUNCTION</scope>
    <scope>SUBCELLULAR LOCATION</scope>
    <scope>TOPOLOGY</scope>
</reference>
<reference key="5">
    <citation type="journal article" date="2012" name="Proc. Natl. Acad. Sci. U.S.A.">
        <title>N-terminal acetylome analyses and functional insights of the N-terminal acetyltransferase NatB.</title>
        <authorList>
            <person name="Van Damme P."/>
            <person name="Lasa M."/>
            <person name="Polevoda B."/>
            <person name="Gazquez C."/>
            <person name="Elosegui-Artola A."/>
            <person name="Kim D.S."/>
            <person name="De Juan-Pardo E."/>
            <person name="Demeyer K."/>
            <person name="Hole K."/>
            <person name="Larrea E."/>
            <person name="Timmerman E."/>
            <person name="Prieto J."/>
            <person name="Arnesen T."/>
            <person name="Sherman F."/>
            <person name="Gevaert K."/>
            <person name="Aldabe R."/>
        </authorList>
    </citation>
    <scope>ACETYLATION [LARGE SCALE ANALYSIS] AT ALA-2</scope>
    <scope>CLEAVAGE OF INITIATOR METHIONINE [LARGE SCALE ANALYSIS]</scope>
    <scope>IDENTIFICATION BY MASS SPECTROMETRY [LARGE SCALE ANALYSIS]</scope>
</reference>
<evidence type="ECO:0000250" key="1">
    <source>
        <dbReference type="UniProtKB" id="Q5NUF3"/>
    </source>
</evidence>
<evidence type="ECO:0000255" key="2"/>
<evidence type="ECO:0000269" key="3">
    <source>
    </source>
</evidence>
<evidence type="ECO:0000305" key="4"/>
<evidence type="ECO:0007744" key="5">
    <source>
    </source>
</evidence>
<organism>
    <name type="scientific">Saccharomyces cerevisiae (strain ATCC 204508 / S288c)</name>
    <name type="common">Baker's yeast</name>
    <dbReference type="NCBI Taxonomy" id="559292"/>
    <lineage>
        <taxon>Eukaryota</taxon>
        <taxon>Fungi</taxon>
        <taxon>Dikarya</taxon>
        <taxon>Ascomycota</taxon>
        <taxon>Saccharomycotina</taxon>
        <taxon>Saccharomycetes</taxon>
        <taxon>Saccharomycetales</taxon>
        <taxon>Saccharomycetaceae</taxon>
        <taxon>Saccharomyces</taxon>
    </lineage>
</organism>
<gene>
    <name type="primary">SAY1</name>
    <name type="ordered locus">YGR263C</name>
</gene>
<sequence>MAANSGLDSKVEYYRLQENEIISAVSSEDADQNDAGFRLSTIHLHLFHGLKFAALLFTVVPVFIILDSMKIIFQRKRRFCLDHVNRSFLRQSSWILDERICQYVLNPLFVCLYPSTFSSPTYVKCNIPIEDQKSPENNIFQDHQLNAPKIVSTKFYQYVMPEGFDPTTDPVLVFYHGGGYALKLTPTSFSFLNNMRNAFPKMAILVPDYTVTATDDQSKKYPLQILQNVAIFDYVVKTMGCKNVVIMGDSAGGNAVLNIVLYLRKCHREIYPKKVIAISPWANATFFHEGEKEYMQGTQEWDGLCLKSHSMFGRMFVGNNPNVDFTSDPFVNIEKNFETKMWQDILKKCSVMITYGSDELLSFQNKILAKKMSDASEGCNHFTAKNVLVEHQGYHTGPILNYSRNMDRWTNIPSIARILEFMQS</sequence>
<accession>P53324</accession>
<accession>D6VV42</accession>
<protein>
    <recommendedName>
        <fullName>Steryl acetyl hydrolase 1</fullName>
        <ecNumber>3.1.1.-</ecNumber>
    </recommendedName>
</protein>
<dbReference type="EC" id="3.1.1.-"/>
<dbReference type="EMBL" id="Y07777">
    <property type="protein sequence ID" value="CAA69085.1"/>
    <property type="molecule type" value="Genomic_DNA"/>
</dbReference>
<dbReference type="EMBL" id="Z73048">
    <property type="protein sequence ID" value="CAA97292.1"/>
    <property type="molecule type" value="Genomic_DNA"/>
</dbReference>
<dbReference type="EMBL" id="Z73049">
    <property type="protein sequence ID" value="CAA97295.1"/>
    <property type="molecule type" value="Genomic_DNA"/>
</dbReference>
<dbReference type="EMBL" id="BK006941">
    <property type="protein sequence ID" value="DAA08353.1"/>
    <property type="molecule type" value="Genomic_DNA"/>
</dbReference>
<dbReference type="PIR" id="S64596">
    <property type="entry name" value="S64596"/>
</dbReference>
<dbReference type="RefSeq" id="NP_011779.3">
    <property type="nucleotide sequence ID" value="NM_001181392.3"/>
</dbReference>
<dbReference type="SMR" id="P53324"/>
<dbReference type="BioGRID" id="33514">
    <property type="interactions" value="89"/>
</dbReference>
<dbReference type="DIP" id="DIP-5103N"/>
<dbReference type="FunCoup" id="P53324">
    <property type="interactions" value="41"/>
</dbReference>
<dbReference type="IntAct" id="P53324">
    <property type="interactions" value="6"/>
</dbReference>
<dbReference type="MINT" id="P53324"/>
<dbReference type="STRING" id="4932.YGR263C"/>
<dbReference type="ESTHER" id="yeast-SAY1">
    <property type="family name" value="Steryl_acetyl_hydrolase"/>
</dbReference>
<dbReference type="GlyCosmos" id="P53324">
    <property type="glycosylation" value="3 sites, No reported glycans"/>
</dbReference>
<dbReference type="GlyGen" id="P53324">
    <property type="glycosylation" value="3 sites"/>
</dbReference>
<dbReference type="iPTMnet" id="P53324"/>
<dbReference type="PaxDb" id="4932-YGR263C"/>
<dbReference type="PeptideAtlas" id="P53324"/>
<dbReference type="EnsemblFungi" id="YGR263C_mRNA">
    <property type="protein sequence ID" value="YGR263C"/>
    <property type="gene ID" value="YGR263C"/>
</dbReference>
<dbReference type="GeneID" id="853179"/>
<dbReference type="KEGG" id="sce:YGR263C"/>
<dbReference type="AGR" id="SGD:S000003495"/>
<dbReference type="SGD" id="S000003495">
    <property type="gene designation" value="SAY1"/>
</dbReference>
<dbReference type="VEuPathDB" id="FungiDB:YGR263C"/>
<dbReference type="eggNOG" id="KOG1515">
    <property type="taxonomic scope" value="Eukaryota"/>
</dbReference>
<dbReference type="HOGENOM" id="CLU_067868_0_0_1"/>
<dbReference type="InParanoid" id="P53324"/>
<dbReference type="OMA" id="AISPWAN"/>
<dbReference type="OrthoDB" id="2152029at2759"/>
<dbReference type="BioCyc" id="YEAST:G3O-30932-MONOMER"/>
<dbReference type="BioGRID-ORCS" id="853179">
    <property type="hits" value="0 hits in 10 CRISPR screens"/>
</dbReference>
<dbReference type="PRO" id="PR:P53324"/>
<dbReference type="Proteomes" id="UP000002311">
    <property type="component" value="Chromosome VII"/>
</dbReference>
<dbReference type="RNAct" id="P53324">
    <property type="molecule type" value="protein"/>
</dbReference>
<dbReference type="GO" id="GO:0071944">
    <property type="term" value="C:cell periphery"/>
    <property type="evidence" value="ECO:0007005"/>
    <property type="project" value="SGD"/>
</dbReference>
<dbReference type="GO" id="GO:0005783">
    <property type="term" value="C:endoplasmic reticulum"/>
    <property type="evidence" value="ECO:0000314"/>
    <property type="project" value="SGD"/>
</dbReference>
<dbReference type="GO" id="GO:0005788">
    <property type="term" value="C:endoplasmic reticulum lumen"/>
    <property type="evidence" value="ECO:0000314"/>
    <property type="project" value="SGD"/>
</dbReference>
<dbReference type="GO" id="GO:0005789">
    <property type="term" value="C:endoplasmic reticulum membrane"/>
    <property type="evidence" value="ECO:0007669"/>
    <property type="project" value="UniProtKB-SubCell"/>
</dbReference>
<dbReference type="GO" id="GO:0005811">
    <property type="term" value="C:lipid droplet"/>
    <property type="evidence" value="ECO:0000314"/>
    <property type="project" value="SGD"/>
</dbReference>
<dbReference type="GO" id="GO:0016020">
    <property type="term" value="C:membrane"/>
    <property type="evidence" value="ECO:0000314"/>
    <property type="project" value="SGD"/>
</dbReference>
<dbReference type="GO" id="GO:0034084">
    <property type="term" value="F:steryl deacetylase activity"/>
    <property type="evidence" value="ECO:0000314"/>
    <property type="project" value="SGD"/>
</dbReference>
<dbReference type="GO" id="GO:0009636">
    <property type="term" value="P:response to toxic substance"/>
    <property type="evidence" value="ECO:0000315"/>
    <property type="project" value="SGD"/>
</dbReference>
<dbReference type="GO" id="GO:0016125">
    <property type="term" value="P:sterol metabolic process"/>
    <property type="evidence" value="ECO:0000315"/>
    <property type="project" value="SGD"/>
</dbReference>
<dbReference type="FunFam" id="3.40.50.1820:FF:000387">
    <property type="entry name" value="SAY1p Sterol deacetylase"/>
    <property type="match status" value="1"/>
</dbReference>
<dbReference type="Gene3D" id="3.40.50.1820">
    <property type="entry name" value="alpha/beta hydrolase"/>
    <property type="match status" value="1"/>
</dbReference>
<dbReference type="InterPro" id="IPR029058">
    <property type="entry name" value="AB_hydrolase_fold"/>
</dbReference>
<dbReference type="InterPro" id="IPR050300">
    <property type="entry name" value="GDXG_lipolytic_enzyme"/>
</dbReference>
<dbReference type="InterPro" id="IPR019436">
    <property type="entry name" value="Say1-like"/>
</dbReference>
<dbReference type="PANTHER" id="PTHR48081">
    <property type="entry name" value="AB HYDROLASE SUPERFAMILY PROTEIN C4A8.06C"/>
    <property type="match status" value="1"/>
</dbReference>
<dbReference type="PANTHER" id="PTHR48081:SF8">
    <property type="entry name" value="ALPHA_BETA HYDROLASE FOLD-3 DOMAIN-CONTAINING PROTEIN-RELATED"/>
    <property type="match status" value="1"/>
</dbReference>
<dbReference type="Pfam" id="PF10340">
    <property type="entry name" value="Say1_Mug180"/>
    <property type="match status" value="1"/>
</dbReference>
<dbReference type="SUPFAM" id="SSF53474">
    <property type="entry name" value="alpha/beta-Hydrolases"/>
    <property type="match status" value="1"/>
</dbReference>
<feature type="initiator methionine" description="Removed" evidence="5">
    <location>
        <position position="1"/>
    </location>
</feature>
<feature type="chain" id="PRO_0000202862" description="Steryl acetyl hydrolase 1">
    <location>
        <begin position="2"/>
        <end position="424"/>
    </location>
</feature>
<feature type="topological domain" description="Cytoplasmic" evidence="2">
    <location>
        <begin position="2"/>
        <end position="45"/>
    </location>
</feature>
<feature type="transmembrane region" description="Helical; Signal-anchor for type II membrane protein" evidence="2">
    <location>
        <begin position="46"/>
        <end position="66"/>
    </location>
</feature>
<feature type="topological domain" description="Lumenal" evidence="2">
    <location>
        <begin position="67"/>
        <end position="424"/>
    </location>
</feature>
<feature type="short sequence motif" description="Involved in the stabilization of the negatively charged intermediate by the formation of the oxyanion hole" evidence="1">
    <location>
        <begin position="176"/>
        <end position="178"/>
    </location>
</feature>
<feature type="active site" evidence="1">
    <location>
        <position position="250"/>
    </location>
</feature>
<feature type="active site" evidence="1">
    <location>
        <position position="395"/>
    </location>
</feature>
<feature type="modified residue" description="N-acetylalanine" evidence="5">
    <location>
        <position position="2"/>
    </location>
</feature>
<feature type="glycosylation site" description="N-linked (GlcNAc...) asparagine" evidence="2">
    <location>
        <position position="85"/>
    </location>
</feature>
<feature type="glycosylation site" description="N-linked (GlcNAc...) asparagine" evidence="2">
    <location>
        <position position="283"/>
    </location>
</feature>
<feature type="glycosylation site" description="N-linked (GlcNAc...) asparagine" evidence="2">
    <location>
        <position position="401"/>
    </location>
</feature>
<name>SAY1_YEAST</name>
<proteinExistence type="evidence at protein level"/>
<keyword id="KW-0007">Acetylation</keyword>
<keyword id="KW-0256">Endoplasmic reticulum</keyword>
<keyword id="KW-0325">Glycoprotein</keyword>
<keyword id="KW-0378">Hydrolase</keyword>
<keyword id="KW-0472">Membrane</keyword>
<keyword id="KW-1185">Reference proteome</keyword>
<keyword id="KW-0735">Signal-anchor</keyword>
<keyword id="KW-0812">Transmembrane</keyword>
<keyword id="KW-1133">Transmembrane helix</keyword>
<comment type="function">
    <text evidence="3">Required for the deacetylation of acetylated sterols. Involved in the resistance to eugenol and pregnenolone toxicity.</text>
</comment>
<comment type="subcellular location">
    <subcellularLocation>
        <location evidence="3">Endoplasmic reticulum membrane</location>
        <topology evidence="3">Single-pass type II membrane protein</topology>
    </subcellularLocation>
</comment>
<comment type="similarity">
    <text evidence="4">Belongs to the 'GDXG' lipolytic enzyme family.</text>
</comment>